<reference key="1">
    <citation type="submission" date="2001-04" db="EMBL/GenBank/DDBJ databases">
        <title>Characterization of transcription factors in the hyperthermophilic archaeon Pyrodictium occultum.</title>
        <authorList>
            <person name="Lindner P."/>
            <person name="Frey G."/>
            <person name="Stetter K.O."/>
        </authorList>
    </citation>
    <scope>NUCLEOTIDE SEQUENCE [GENOMIC DNA]</scope>
    <source>
        <strain>PL 19</strain>
    </source>
</reference>
<dbReference type="EMBL" id="AF367982">
    <property type="protein sequence ID" value="AAK38724.1"/>
    <property type="molecule type" value="Genomic_DNA"/>
</dbReference>
<dbReference type="RefSeq" id="WP_168371230.1">
    <property type="nucleotide sequence ID" value="NZ_LNTB01000001.1"/>
</dbReference>
<dbReference type="SMR" id="Q977X4"/>
<dbReference type="STRING" id="2309.CF15_03000"/>
<dbReference type="GO" id="GO:0097550">
    <property type="term" value="C:transcription preinitiation complex"/>
    <property type="evidence" value="ECO:0007669"/>
    <property type="project" value="TreeGrafter"/>
</dbReference>
<dbReference type="GO" id="GO:0003700">
    <property type="term" value="F:DNA-binding transcription factor activity"/>
    <property type="evidence" value="ECO:0007669"/>
    <property type="project" value="UniProtKB-UniRule"/>
</dbReference>
<dbReference type="GO" id="GO:0017025">
    <property type="term" value="F:TBP-class protein binding"/>
    <property type="evidence" value="ECO:0007669"/>
    <property type="project" value="InterPro"/>
</dbReference>
<dbReference type="GO" id="GO:0070897">
    <property type="term" value="P:transcription preinitiation complex assembly"/>
    <property type="evidence" value="ECO:0007669"/>
    <property type="project" value="InterPro"/>
</dbReference>
<dbReference type="CDD" id="cd20550">
    <property type="entry name" value="CYCLIN_TFIIB_archaea_like_rpt2"/>
    <property type="match status" value="1"/>
</dbReference>
<dbReference type="FunFam" id="1.10.472.10:FF:000023">
    <property type="entry name" value="Transcription initiation factor IIB"/>
    <property type="match status" value="1"/>
</dbReference>
<dbReference type="FunFam" id="1.10.472.170:FF:000001">
    <property type="entry name" value="Transcription initiation factor IIB"/>
    <property type="match status" value="1"/>
</dbReference>
<dbReference type="Gene3D" id="1.10.472.170">
    <property type="match status" value="1"/>
</dbReference>
<dbReference type="Gene3D" id="1.10.472.10">
    <property type="entry name" value="Cyclin-like"/>
    <property type="match status" value="1"/>
</dbReference>
<dbReference type="HAMAP" id="MF_00383">
    <property type="entry name" value="TF2B_arch"/>
    <property type="match status" value="1"/>
</dbReference>
<dbReference type="InterPro" id="IPR013763">
    <property type="entry name" value="Cyclin-like_dom"/>
</dbReference>
<dbReference type="InterPro" id="IPR036915">
    <property type="entry name" value="Cyclin-like_sf"/>
</dbReference>
<dbReference type="InterPro" id="IPR000812">
    <property type="entry name" value="TFIIB"/>
</dbReference>
<dbReference type="InterPro" id="IPR023484">
    <property type="entry name" value="TFIIB_arc"/>
</dbReference>
<dbReference type="InterPro" id="IPR023486">
    <property type="entry name" value="TFIIB_CS"/>
</dbReference>
<dbReference type="InterPro" id="IPR013150">
    <property type="entry name" value="TFIIB_cyclin"/>
</dbReference>
<dbReference type="InterPro" id="IPR013137">
    <property type="entry name" value="Znf_TFIIB"/>
</dbReference>
<dbReference type="NCBIfam" id="NF001658">
    <property type="entry name" value="PRK00423.1"/>
    <property type="match status" value="1"/>
</dbReference>
<dbReference type="PANTHER" id="PTHR11618:SF13">
    <property type="entry name" value="TRANSCRIPTION INITIATION FACTOR IIB"/>
    <property type="match status" value="1"/>
</dbReference>
<dbReference type="PANTHER" id="PTHR11618">
    <property type="entry name" value="TRANSCRIPTION INITIATION FACTOR IIB-RELATED"/>
    <property type="match status" value="1"/>
</dbReference>
<dbReference type="Pfam" id="PF00382">
    <property type="entry name" value="TFIIB"/>
    <property type="match status" value="2"/>
</dbReference>
<dbReference type="Pfam" id="PF08271">
    <property type="entry name" value="Zn_Ribbon_TF"/>
    <property type="match status" value="1"/>
</dbReference>
<dbReference type="PRINTS" id="PR00685">
    <property type="entry name" value="TIFACTORIIB"/>
</dbReference>
<dbReference type="SMART" id="SM00385">
    <property type="entry name" value="CYCLIN"/>
    <property type="match status" value="2"/>
</dbReference>
<dbReference type="SUPFAM" id="SSF47954">
    <property type="entry name" value="Cyclin-like"/>
    <property type="match status" value="2"/>
</dbReference>
<dbReference type="SUPFAM" id="SSF57783">
    <property type="entry name" value="Zinc beta-ribbon"/>
    <property type="match status" value="1"/>
</dbReference>
<dbReference type="PROSITE" id="PS00782">
    <property type="entry name" value="TFIIB"/>
    <property type="match status" value="2"/>
</dbReference>
<evidence type="ECO:0000255" key="1">
    <source>
        <dbReference type="HAMAP-Rule" id="MF_00383"/>
    </source>
</evidence>
<organism>
    <name type="scientific">Pyrodictium occultum</name>
    <dbReference type="NCBI Taxonomy" id="2309"/>
    <lineage>
        <taxon>Archaea</taxon>
        <taxon>Thermoproteota</taxon>
        <taxon>Thermoprotei</taxon>
        <taxon>Desulfurococcales</taxon>
        <taxon>Pyrodictiaceae</taxon>
        <taxon>Pyrodictium</taxon>
    </lineage>
</organism>
<comment type="function">
    <text evidence="1">Stabilizes TBP binding to an archaeal box-A promoter. Also responsible for recruiting RNA polymerase II to the pre-initiation complex (DNA-TBP-TFIIB).</text>
</comment>
<comment type="similarity">
    <text evidence="1">Belongs to the TFIIB family.</text>
</comment>
<protein>
    <recommendedName>
        <fullName evidence="1">Transcription initiation factor IIB</fullName>
        <shortName evidence="1">TFIIB</shortName>
    </recommendedName>
</protein>
<keyword id="KW-0677">Repeat</keyword>
<keyword id="KW-0804">Transcription</keyword>
<keyword id="KW-0805">Transcription regulation</keyword>
<name>TF2B_PYROC</name>
<gene>
    <name evidence="1" type="primary">tfb</name>
</gene>
<accession>Q977X4</accession>
<sequence length="310" mass="34491">MTKEQAPRASGEKEEGCPPEYIVFDEERGEYICTLTGEVVEETVIDTGPEWRAYTPEERTRRSRVGSPLTHTLPDYGILTTISGYRDANGRKLEARLRIEASRLRRLQAKLRATTSIEKNIEQAAREITRLVEALNLPRGIIDTAMMIYRQAAEKGLVRGRSLESMAAAAVYAACRIRGIPRSIDDIAEVVKGGRKEVARCYRLIVRELKLRMPIVDPVRYVSRIVSALRLSPAVERRAAEILVQARKMGLTAGKDPAGLAAAAIYIAALELGERRTQKEIAAAAGVTEVTVRNRYKELVQKLNIPLPAQ</sequence>
<feature type="chain" id="PRO_0000119331" description="Transcription initiation factor IIB">
    <location>
        <begin position="1"/>
        <end position="310"/>
    </location>
</feature>
<feature type="repeat" description="1">
    <location>
        <begin position="126"/>
        <end position="209"/>
    </location>
</feature>
<feature type="repeat" description="2">
    <location>
        <begin position="220"/>
        <end position="301"/>
    </location>
</feature>
<proteinExistence type="inferred from homology"/>